<accession>A6VM24</accession>
<comment type="function">
    <text evidence="1">Activates ribosomal RNA transcription. Plays a direct role in upstream activation of rRNA promoters.</text>
</comment>
<comment type="subunit">
    <text evidence="1">Homodimer.</text>
</comment>
<comment type="similarity">
    <text evidence="1">Belongs to the transcriptional regulatory Fis family.</text>
</comment>
<feature type="chain" id="PRO_1000071565" description="DNA-binding protein Fis">
    <location>
        <begin position="1"/>
        <end position="99"/>
    </location>
</feature>
<feature type="DNA-binding region" description="H-T-H motif" evidence="1">
    <location>
        <begin position="75"/>
        <end position="94"/>
    </location>
</feature>
<keyword id="KW-0010">Activator</keyword>
<keyword id="KW-0238">DNA-binding</keyword>
<keyword id="KW-1185">Reference proteome</keyword>
<keyword id="KW-0804">Transcription</keyword>
<keyword id="KW-0805">Transcription regulation</keyword>
<name>FIS_ACTSZ</name>
<gene>
    <name evidence="1" type="primary">fis</name>
    <name type="ordered locus">Asuc_0648</name>
</gene>
<protein>
    <recommendedName>
        <fullName evidence="1">DNA-binding protein Fis</fullName>
    </recommendedName>
</protein>
<reference key="1">
    <citation type="journal article" date="2010" name="BMC Genomics">
        <title>A genomic perspective on the potential of Actinobacillus succinogenes for industrial succinate production.</title>
        <authorList>
            <person name="McKinlay J.B."/>
            <person name="Laivenieks M."/>
            <person name="Schindler B.D."/>
            <person name="McKinlay A.A."/>
            <person name="Siddaramappa S."/>
            <person name="Challacombe J.F."/>
            <person name="Lowry S.R."/>
            <person name="Clum A."/>
            <person name="Lapidus A.L."/>
            <person name="Burkhart K.B."/>
            <person name="Harkins V."/>
            <person name="Vieille C."/>
        </authorList>
    </citation>
    <scope>NUCLEOTIDE SEQUENCE [LARGE SCALE GENOMIC DNA]</scope>
    <source>
        <strain>ATCC 55618 / DSM 22257 / CCUG 43843 / 130Z</strain>
    </source>
</reference>
<evidence type="ECO:0000255" key="1">
    <source>
        <dbReference type="HAMAP-Rule" id="MF_00166"/>
    </source>
</evidence>
<sequence length="99" mass="11243">MLEQQRNPAEALIVSVLNSQSQVTNKPLRESVKQALKNYFAQLDGEDATDLYELVLSEVEHPMLDMVMQYTRGNQTRAALMLGVNRGTLRKKLKKYGMS</sequence>
<dbReference type="EMBL" id="CP000746">
    <property type="protein sequence ID" value="ABR74021.1"/>
    <property type="molecule type" value="Genomic_DNA"/>
</dbReference>
<dbReference type="RefSeq" id="WP_012072401.1">
    <property type="nucleotide sequence ID" value="NC_009655.1"/>
</dbReference>
<dbReference type="SMR" id="A6VM24"/>
<dbReference type="STRING" id="339671.Asuc_0648"/>
<dbReference type="GeneID" id="93227267"/>
<dbReference type="KEGG" id="asu:Asuc_0648"/>
<dbReference type="eggNOG" id="COG2901">
    <property type="taxonomic scope" value="Bacteria"/>
</dbReference>
<dbReference type="HOGENOM" id="CLU_158040_3_0_6"/>
<dbReference type="OrthoDB" id="9802388at2"/>
<dbReference type="Proteomes" id="UP000001114">
    <property type="component" value="Chromosome"/>
</dbReference>
<dbReference type="GO" id="GO:0003700">
    <property type="term" value="F:DNA-binding transcription factor activity"/>
    <property type="evidence" value="ECO:0007669"/>
    <property type="project" value="UniProtKB-UniRule"/>
</dbReference>
<dbReference type="GO" id="GO:0043565">
    <property type="term" value="F:sequence-specific DNA binding"/>
    <property type="evidence" value="ECO:0007669"/>
    <property type="project" value="InterPro"/>
</dbReference>
<dbReference type="FunFam" id="1.10.10.60:FF:000006">
    <property type="entry name" value="DNA-binding protein Fis"/>
    <property type="match status" value="1"/>
</dbReference>
<dbReference type="Gene3D" id="1.10.10.60">
    <property type="entry name" value="Homeodomain-like"/>
    <property type="match status" value="1"/>
</dbReference>
<dbReference type="HAMAP" id="MF_00166">
    <property type="entry name" value="DNA_binding_Fis"/>
    <property type="match status" value="1"/>
</dbReference>
<dbReference type="InterPro" id="IPR005412">
    <property type="entry name" value="Fis_DNA-bd"/>
</dbReference>
<dbReference type="InterPro" id="IPR009057">
    <property type="entry name" value="Homeodomain-like_sf"/>
</dbReference>
<dbReference type="InterPro" id="IPR002197">
    <property type="entry name" value="HTH_Fis"/>
</dbReference>
<dbReference type="InterPro" id="IPR050207">
    <property type="entry name" value="Trans_regulatory_Fis"/>
</dbReference>
<dbReference type="NCBIfam" id="NF001659">
    <property type="entry name" value="PRK00430.1"/>
    <property type="match status" value="1"/>
</dbReference>
<dbReference type="PANTHER" id="PTHR47918">
    <property type="entry name" value="DNA-BINDING PROTEIN FIS"/>
    <property type="match status" value="1"/>
</dbReference>
<dbReference type="PANTHER" id="PTHR47918:SF1">
    <property type="entry name" value="DNA-BINDING PROTEIN FIS"/>
    <property type="match status" value="1"/>
</dbReference>
<dbReference type="Pfam" id="PF02954">
    <property type="entry name" value="HTH_8"/>
    <property type="match status" value="1"/>
</dbReference>
<dbReference type="PIRSF" id="PIRSF002097">
    <property type="entry name" value="DNA-binding_Fis"/>
    <property type="match status" value="1"/>
</dbReference>
<dbReference type="PRINTS" id="PR01591">
    <property type="entry name" value="DNABINDNGFIS"/>
</dbReference>
<dbReference type="PRINTS" id="PR01590">
    <property type="entry name" value="HTHFIS"/>
</dbReference>
<dbReference type="SUPFAM" id="SSF46689">
    <property type="entry name" value="Homeodomain-like"/>
    <property type="match status" value="1"/>
</dbReference>
<proteinExistence type="inferred from homology"/>
<organism>
    <name type="scientific">Actinobacillus succinogenes (strain ATCC 55618 / DSM 22257 / CCUG 43843 / 130Z)</name>
    <dbReference type="NCBI Taxonomy" id="339671"/>
    <lineage>
        <taxon>Bacteria</taxon>
        <taxon>Pseudomonadati</taxon>
        <taxon>Pseudomonadota</taxon>
        <taxon>Gammaproteobacteria</taxon>
        <taxon>Pasteurellales</taxon>
        <taxon>Pasteurellaceae</taxon>
        <taxon>Actinobacillus</taxon>
    </lineage>
</organism>